<accession>Q9ES54</accession>
<accession>Q3T1J3</accession>
<dbReference type="EMBL" id="AF234600">
    <property type="protein sequence ID" value="AAG27534.1"/>
    <property type="molecule type" value="mRNA"/>
</dbReference>
<dbReference type="EMBL" id="BC101887">
    <property type="protein sequence ID" value="AAI01888.1"/>
    <property type="molecule type" value="mRNA"/>
</dbReference>
<dbReference type="RefSeq" id="NP_542144.1">
    <property type="nucleotide sequence ID" value="NM_080577.2"/>
</dbReference>
<dbReference type="PDB" id="1NJ3">
    <property type="method" value="NMR"/>
    <property type="chains" value="A=580-608"/>
</dbReference>
<dbReference type="PDB" id="1Q5W">
    <property type="method" value="NMR"/>
    <property type="chains" value="A=580-608"/>
</dbReference>
<dbReference type="PDBsum" id="1NJ3"/>
<dbReference type="PDBsum" id="1Q5W"/>
<dbReference type="SMR" id="Q9ES54"/>
<dbReference type="BioGRID" id="250817">
    <property type="interactions" value="8"/>
</dbReference>
<dbReference type="ComplexPortal" id="CPX-138">
    <property type="entry name" value="Vcp-Npl4-Ufd1 AAA ATPase complex"/>
</dbReference>
<dbReference type="CORUM" id="Q9ES54"/>
<dbReference type="DIP" id="DIP-41365N"/>
<dbReference type="FunCoup" id="Q9ES54">
    <property type="interactions" value="3848"/>
</dbReference>
<dbReference type="IntAct" id="Q9ES54">
    <property type="interactions" value="11"/>
</dbReference>
<dbReference type="MINT" id="Q9ES54"/>
<dbReference type="STRING" id="10116.ENSRNOP00000051856"/>
<dbReference type="iPTMnet" id="Q9ES54"/>
<dbReference type="PhosphoSitePlus" id="Q9ES54"/>
<dbReference type="jPOST" id="Q9ES54"/>
<dbReference type="PaxDb" id="10116-ENSRNOP00000051856"/>
<dbReference type="Ensembl" id="ENSRNOT00000080188.2">
    <property type="protein sequence ID" value="ENSRNOP00000068982.2"/>
    <property type="gene ID" value="ENSRNOG00000036698.5"/>
</dbReference>
<dbReference type="GeneID" id="140639"/>
<dbReference type="KEGG" id="rno:140639"/>
<dbReference type="AGR" id="RGD:620794"/>
<dbReference type="CTD" id="55666"/>
<dbReference type="RGD" id="620794">
    <property type="gene designation" value="Nploc4"/>
</dbReference>
<dbReference type="eggNOG" id="KOG2834">
    <property type="taxonomic scope" value="Eukaryota"/>
</dbReference>
<dbReference type="GeneTree" id="ENSGT00390000018731"/>
<dbReference type="InParanoid" id="Q9ES54"/>
<dbReference type="OMA" id="KWSRTGR"/>
<dbReference type="OrthoDB" id="5427at9989"/>
<dbReference type="PhylomeDB" id="Q9ES54"/>
<dbReference type="Reactome" id="R-RNO-110320">
    <property type="pathway name" value="Translesion Synthesis by POLH"/>
</dbReference>
<dbReference type="Reactome" id="R-RNO-8951664">
    <property type="pathway name" value="Neddylation"/>
</dbReference>
<dbReference type="Reactome" id="R-RNO-9755511">
    <property type="pathway name" value="KEAP1-NFE2L2 pathway"/>
</dbReference>
<dbReference type="UniPathway" id="UPA00144"/>
<dbReference type="EvolutionaryTrace" id="Q9ES54"/>
<dbReference type="PRO" id="PR:Q9ES54"/>
<dbReference type="Proteomes" id="UP000002494">
    <property type="component" value="Chromosome 10"/>
</dbReference>
<dbReference type="GO" id="GO:0005829">
    <property type="term" value="C:cytosol"/>
    <property type="evidence" value="ECO:0007669"/>
    <property type="project" value="UniProtKB-SubCell"/>
</dbReference>
<dbReference type="GO" id="GO:0005634">
    <property type="term" value="C:nucleus"/>
    <property type="evidence" value="ECO:0000318"/>
    <property type="project" value="GO_Central"/>
</dbReference>
<dbReference type="GO" id="GO:0036501">
    <property type="term" value="C:UFD1-NPL4 complex"/>
    <property type="evidence" value="ECO:0000314"/>
    <property type="project" value="ParkinsonsUK-UCL"/>
</dbReference>
<dbReference type="GO" id="GO:0034098">
    <property type="term" value="C:VCP-NPL4-UFD1 AAA ATPase complex"/>
    <property type="evidence" value="ECO:0000314"/>
    <property type="project" value="ParkinsonsUK-UCL"/>
</dbReference>
<dbReference type="GO" id="GO:0051117">
    <property type="term" value="F:ATPase binding"/>
    <property type="evidence" value="ECO:0000353"/>
    <property type="project" value="ParkinsonsUK-UCL"/>
</dbReference>
<dbReference type="GO" id="GO:0044877">
    <property type="term" value="F:protein-containing complex binding"/>
    <property type="evidence" value="ECO:0000353"/>
    <property type="project" value="RGD"/>
</dbReference>
<dbReference type="GO" id="GO:0043130">
    <property type="term" value="F:ubiquitin binding"/>
    <property type="evidence" value="ECO:0000314"/>
    <property type="project" value="BHF-UCL"/>
</dbReference>
<dbReference type="GO" id="GO:0031625">
    <property type="term" value="F:ubiquitin protein ligase binding"/>
    <property type="evidence" value="ECO:0000314"/>
    <property type="project" value="BHF-UCL"/>
</dbReference>
<dbReference type="GO" id="GO:0008270">
    <property type="term" value="F:zinc ion binding"/>
    <property type="evidence" value="ECO:0007669"/>
    <property type="project" value="UniProtKB-KW"/>
</dbReference>
<dbReference type="GO" id="GO:0036503">
    <property type="term" value="P:ERAD pathway"/>
    <property type="evidence" value="ECO:0000314"/>
    <property type="project" value="ComplexPortal"/>
</dbReference>
<dbReference type="GO" id="GO:0007030">
    <property type="term" value="P:Golgi organization"/>
    <property type="evidence" value="ECO:0000314"/>
    <property type="project" value="HGNC-UCL"/>
</dbReference>
<dbReference type="GO" id="GO:0039536">
    <property type="term" value="P:negative regulation of RIG-I signaling pathway"/>
    <property type="evidence" value="ECO:0000250"/>
    <property type="project" value="UniProtKB"/>
</dbReference>
<dbReference type="GO" id="GO:0032480">
    <property type="term" value="P:negative regulation of type I interferon production"/>
    <property type="evidence" value="ECO:0000250"/>
    <property type="project" value="UniProtKB"/>
</dbReference>
<dbReference type="GO" id="GO:0043161">
    <property type="term" value="P:proteasome-mediated ubiquitin-dependent protein catabolic process"/>
    <property type="evidence" value="ECO:0007669"/>
    <property type="project" value="UniProtKB-UniPathway"/>
</dbReference>
<dbReference type="GO" id="GO:0030970">
    <property type="term" value="P:retrograde protein transport, ER to cytosol"/>
    <property type="evidence" value="ECO:0000269"/>
    <property type="project" value="ComplexPortal"/>
</dbReference>
<dbReference type="GO" id="GO:0006511">
    <property type="term" value="P:ubiquitin-dependent protein catabolic process"/>
    <property type="evidence" value="ECO:0000250"/>
    <property type="project" value="UniProtKB"/>
</dbReference>
<dbReference type="CDD" id="cd08061">
    <property type="entry name" value="MPN_NPL4"/>
    <property type="match status" value="1"/>
</dbReference>
<dbReference type="FunFam" id="2.30.30.380:FF:000008">
    <property type="entry name" value="nuclear protein localization protein 4 homolog"/>
    <property type="match status" value="1"/>
</dbReference>
<dbReference type="FunFam" id="3.10.20.90:FF:000084">
    <property type="entry name" value="nuclear protein localization protein 4 homolog"/>
    <property type="match status" value="1"/>
</dbReference>
<dbReference type="FunFam" id="3.40.140.10:FF:000012">
    <property type="entry name" value="nuclear protein localization protein 4 homolog"/>
    <property type="match status" value="1"/>
</dbReference>
<dbReference type="Gene3D" id="3.40.140.10">
    <property type="entry name" value="Cytidine Deaminase, domain 2"/>
    <property type="match status" value="1"/>
</dbReference>
<dbReference type="Gene3D" id="3.10.20.90">
    <property type="entry name" value="Phosphatidylinositol 3-kinase Catalytic Subunit, Chain A, domain 1"/>
    <property type="match status" value="1"/>
</dbReference>
<dbReference type="Gene3D" id="2.30.30.380">
    <property type="entry name" value="Zn-finger domain of Sec23/24"/>
    <property type="match status" value="1"/>
</dbReference>
<dbReference type="InterPro" id="IPR037518">
    <property type="entry name" value="MPN"/>
</dbReference>
<dbReference type="InterPro" id="IPR016563">
    <property type="entry name" value="Npl4"/>
</dbReference>
<dbReference type="InterPro" id="IPR007717">
    <property type="entry name" value="NPL4_C"/>
</dbReference>
<dbReference type="InterPro" id="IPR024682">
    <property type="entry name" value="Npl4_Ub-like_dom"/>
</dbReference>
<dbReference type="InterPro" id="IPR007716">
    <property type="entry name" value="NPL4_Zn-bd_put"/>
</dbReference>
<dbReference type="InterPro" id="IPR029071">
    <property type="entry name" value="Ubiquitin-like_domsf"/>
</dbReference>
<dbReference type="InterPro" id="IPR001876">
    <property type="entry name" value="Znf_RanBP2"/>
</dbReference>
<dbReference type="InterPro" id="IPR036443">
    <property type="entry name" value="Znf_RanBP2_sf"/>
</dbReference>
<dbReference type="PANTHER" id="PTHR12710">
    <property type="entry name" value="NUCLEAR PROTEIN LOCALIZATION 4"/>
    <property type="match status" value="1"/>
</dbReference>
<dbReference type="PANTHER" id="PTHR12710:SF0">
    <property type="entry name" value="NUCLEAR PROTEIN LOCALIZATION PROTEIN 4 HOMOLOG"/>
    <property type="match status" value="1"/>
</dbReference>
<dbReference type="Pfam" id="PF05021">
    <property type="entry name" value="NPL4"/>
    <property type="match status" value="1"/>
</dbReference>
<dbReference type="Pfam" id="PF11543">
    <property type="entry name" value="UN_NPL4"/>
    <property type="match status" value="1"/>
</dbReference>
<dbReference type="Pfam" id="PF05020">
    <property type="entry name" value="zf-NPL4"/>
    <property type="match status" value="1"/>
</dbReference>
<dbReference type="PIRSF" id="PIRSF010052">
    <property type="entry name" value="Polyub_prc_Npl4"/>
    <property type="match status" value="1"/>
</dbReference>
<dbReference type="SMART" id="SM00547">
    <property type="entry name" value="ZnF_RBZ"/>
    <property type="match status" value="1"/>
</dbReference>
<dbReference type="SUPFAM" id="SSF90209">
    <property type="entry name" value="Ran binding protein zinc finger-like"/>
    <property type="match status" value="1"/>
</dbReference>
<dbReference type="SUPFAM" id="SSF54236">
    <property type="entry name" value="Ubiquitin-like"/>
    <property type="match status" value="1"/>
</dbReference>
<dbReference type="PROSITE" id="PS50249">
    <property type="entry name" value="MPN"/>
    <property type="match status" value="1"/>
</dbReference>
<dbReference type="PROSITE" id="PS01358">
    <property type="entry name" value="ZF_RANBP2_1"/>
    <property type="match status" value="1"/>
</dbReference>
<dbReference type="PROSITE" id="PS50199">
    <property type="entry name" value="ZF_RANBP2_2"/>
    <property type="match status" value="1"/>
</dbReference>
<name>NPL4_RAT</name>
<feature type="initiator methionine" description="Removed" evidence="2">
    <location>
        <position position="1"/>
    </location>
</feature>
<feature type="chain" id="PRO_0000057943" description="Nuclear protein localization protein 4 homolog">
    <location>
        <begin position="2"/>
        <end position="608"/>
    </location>
</feature>
<feature type="domain" description="MPN" evidence="4">
    <location>
        <begin position="226"/>
        <end position="363"/>
    </location>
</feature>
<feature type="zinc finger region" description="RanBP2-type" evidence="3">
    <location>
        <begin position="580"/>
        <end position="608"/>
    </location>
</feature>
<feature type="modified residue" description="N-acetylalanine" evidence="2">
    <location>
        <position position="2"/>
    </location>
</feature>
<feature type="modified residue" description="N6-acetyllysine" evidence="1">
    <location>
        <position position="179"/>
    </location>
</feature>
<feature type="strand" evidence="12">
    <location>
        <begin position="587"/>
        <end position="589"/>
    </location>
</feature>
<feature type="strand" evidence="12">
    <location>
        <begin position="601"/>
        <end position="603"/>
    </location>
</feature>
<protein>
    <recommendedName>
        <fullName>Nuclear protein localization protein 4 homolog</fullName>
        <shortName>Protein NPL4</shortName>
    </recommendedName>
</protein>
<reference key="1">
    <citation type="journal article" date="2000" name="EMBO J.">
        <title>A complex of mammalian ufd1 and npl4 links the AAA-ATPase, p97, to ubiquitin and nuclear transport pathways.</title>
        <authorList>
            <person name="Meyer H.H."/>
            <person name="Shorter J.G."/>
            <person name="Seemann J."/>
            <person name="Pappin D."/>
            <person name="Warren G."/>
        </authorList>
    </citation>
    <scope>NUCLEOTIDE SEQUENCE [MRNA]</scope>
    <scope>PROTEIN SEQUENCE OF 9-17; 24-31; 36-50; 71-116; 161-169; 222-236; 244-252; 357-316; 405-444; 459-477 AND 536-544</scope>
    <scope>FUNCTION</scope>
    <scope>HETERODIMERIZATION WITH UFD1</scope>
    <scope>INTERACTION WITH VCP</scope>
    <scope>SUBCELLULAR LOCATION</scope>
    <source>
        <tissue>Liver</tissue>
    </source>
</reference>
<reference key="2">
    <citation type="journal article" date="2004" name="Genome Res.">
        <title>The status, quality, and expansion of the NIH full-length cDNA project: the Mammalian Gene Collection (MGC).</title>
        <authorList>
            <consortium name="The MGC Project Team"/>
        </authorList>
    </citation>
    <scope>NUCLEOTIDE SEQUENCE [LARGE SCALE MRNA]</scope>
    <source>
        <tissue>Prostate</tissue>
    </source>
</reference>
<reference key="3">
    <citation type="journal article" date="2001" name="Nat. Cell Biol.">
        <title>Distinct AAA-ATPase p97 complexes function in discrete steps of nuclear assembly.</title>
        <authorList>
            <person name="Hetzer M."/>
            <person name="Meyer H.H."/>
            <person name="Walther T.C."/>
            <person name="Bilbao-Cortes D."/>
            <person name="Warren G."/>
            <person name="Mattaj I.W."/>
        </authorList>
    </citation>
    <scope>FUNCTION</scope>
</reference>
<reference key="4">
    <citation type="journal article" date="2001" name="Nature">
        <title>The AAA ATPase Cdc48/p97 and its partners transport proteins from the ER into the cytosol.</title>
        <authorList>
            <person name="Ye Y."/>
            <person name="Meyer H.H."/>
            <person name="Rapoport T.A."/>
        </authorList>
    </citation>
    <scope>FUNCTION</scope>
</reference>
<reference key="5">
    <citation type="journal article" date="2003" name="Cell">
        <title>The AAA-ATPase Cdc48/p97 regulates spindle disassembly at the end of mitosis.</title>
        <authorList>
            <person name="Cao K."/>
            <person name="Nakajima R."/>
            <person name="Meyer H.H."/>
            <person name="Zheng Y."/>
        </authorList>
    </citation>
    <scope>FUNCTION</scope>
</reference>
<reference key="6">
    <citation type="journal article" date="2002" name="EMBO J.">
        <title>Direct binding of ubiquitin conjugates by the mammalian p97 adaptor complexes, p47 and Ufd1-Npl4.</title>
        <authorList>
            <person name="Meyer H.H."/>
            <person name="Wang Y."/>
            <person name="Warren G."/>
        </authorList>
    </citation>
    <scope>STRUCTURE BY NMR OF 580-608</scope>
    <scope>FUNCTION</scope>
</reference>
<reference key="7">
    <citation type="journal article" date="2003" name="J. Biol. Chem.">
        <title>Structure and ubiquitin interactions of the conserved zinc finger domain of Npl4.</title>
        <authorList>
            <person name="Wang B."/>
            <person name="Alam S.L."/>
            <person name="Meyer H.H."/>
            <person name="Payne M."/>
            <person name="Stemmler T.L."/>
            <person name="Davis D.R."/>
            <person name="Sundquist W.I."/>
        </authorList>
    </citation>
    <scope>FUNCTION</scope>
    <scope>STRUCTURE BY NMR OF 580-608 IN COMPLEX WITH ZINC</scope>
    <scope>INTERACTION WITH UBIQUITIN</scope>
</reference>
<evidence type="ECO:0000250" key="1">
    <source>
        <dbReference type="UniProtKB" id="P60670"/>
    </source>
</evidence>
<evidence type="ECO:0000250" key="2">
    <source>
        <dbReference type="UniProtKB" id="Q8TAT6"/>
    </source>
</evidence>
<evidence type="ECO:0000255" key="3">
    <source>
        <dbReference type="PROSITE-ProRule" id="PRU00322"/>
    </source>
</evidence>
<evidence type="ECO:0000255" key="4">
    <source>
        <dbReference type="PROSITE-ProRule" id="PRU01182"/>
    </source>
</evidence>
<evidence type="ECO:0000269" key="5">
    <source>
    </source>
</evidence>
<evidence type="ECO:0000269" key="6">
    <source>
    </source>
</evidence>
<evidence type="ECO:0000269" key="7">
    <source>
    </source>
</evidence>
<evidence type="ECO:0000269" key="8">
    <source>
    </source>
</evidence>
<evidence type="ECO:0000269" key="9">
    <source>
    </source>
</evidence>
<evidence type="ECO:0000269" key="10">
    <source>
    </source>
</evidence>
<evidence type="ECO:0000305" key="11"/>
<evidence type="ECO:0007829" key="12">
    <source>
        <dbReference type="PDB" id="1NJ3"/>
    </source>
</evidence>
<keyword id="KW-0002">3D-structure</keyword>
<keyword id="KW-0007">Acetylation</keyword>
<keyword id="KW-0143">Chaperone</keyword>
<keyword id="KW-0963">Cytoplasm</keyword>
<keyword id="KW-0903">Direct protein sequencing</keyword>
<keyword id="KW-0256">Endoplasmic reticulum</keyword>
<keyword id="KW-0479">Metal-binding</keyword>
<keyword id="KW-0539">Nucleus</keyword>
<keyword id="KW-1185">Reference proteome</keyword>
<keyword id="KW-0862">Zinc</keyword>
<keyword id="KW-0863">Zinc-finger</keyword>
<comment type="function">
    <text evidence="2 5 6 7 8 9 10">The ternary complex containing UFD1, VCP and NPLOC4 binds ubiquitinated proteins and is necessary for the export of misfolded proteins from the ER to the cytoplasm, where they are degraded by the proteasome. The NPLOC4-UFD1-VCP complex regulates spindle disassembly at the end of mitosis and is necessary for the formation of a closed nuclear envelope (PubMed:10811609, PubMed:11740563, PubMed:11781570, PubMed:12411482, PubMed:12644454, PubMed:14636562). Acts as a negative regulator of type I interferon production via the complex formed with VCP and UFD1, which binds to RIGI and recruits RNF125 to promote ubiquitination and degradation of RIGI (By similarity).</text>
</comment>
<comment type="pathway">
    <text>Protein degradation; proteasomal ubiquitin-dependent pathway.</text>
</comment>
<comment type="subunit">
    <text evidence="2 5 9">Heterodimer with UFD1 (PubMed:10811609, PubMed:12644454). The heterodimer binds ubiquitinated proteins (PubMed:12644454). The heterodimer binds to VCP and inhibits Golgi membrane fusion (PubMed:10811609, PubMed:12644454). Interacts with ZFAND2B; probably through VCP (By similarity).</text>
</comment>
<comment type="interaction">
    <interactant intactId="EBI-1993990">
        <id>Q9ES54</id>
    </interactant>
    <interactant intactId="EBI-399031">
        <id>Q9ES53</id>
        <label>Ufd1</label>
    </interactant>
    <organismsDiffer>false</organismsDiffer>
    <experiments>6</experiments>
</comment>
<comment type="interaction">
    <interactant intactId="EBI-1993990">
        <id>Q9ES54</id>
    </interactant>
    <interactant intactId="EBI-7961331">
        <id>P70362</id>
        <label>Ufd1</label>
    </interactant>
    <organismsDiffer>true</organismsDiffer>
    <experiments>18</experiments>
</comment>
<comment type="interaction">
    <interactant intactId="EBI-1993990">
        <id>Q9ES54</id>
    </interactant>
    <interactant intactId="EBI-80597">
        <id>Q01853</id>
        <label>Vcp</label>
    </interactant>
    <organismsDiffer>true</organismsDiffer>
    <experiments>11</experiments>
</comment>
<comment type="subcellular location">
    <subcellularLocation>
        <location evidence="5">Cytoplasm</location>
        <location evidence="5">Cytosol</location>
    </subcellularLocation>
    <subcellularLocation>
        <location evidence="5">Endoplasmic reticulum</location>
    </subcellularLocation>
    <subcellularLocation>
        <location evidence="5">Nucleus</location>
    </subcellularLocation>
    <text>Associated with the endoplasmic reticulum and nuclear.</text>
</comment>
<comment type="domain">
    <text evidence="9">Binds ubiquitinated proteins via its RanBP2-type zinc finger.</text>
</comment>
<comment type="similarity">
    <text evidence="11">Belongs to the NPL4 family.</text>
</comment>
<sequence length="608" mass="68056">MAESIIIRVQSPDGVKRITATKRETAATFLKKVAKEFGFQNNGFSVYINRNKTGEITASSSKSLHLLKIKHGDLLFLFPSSLAGPSSEMETSTSVGLKAFGAPHVVEDEIDQYLSKQDGKIYRSRDPQLCRHGPLGKCVHCVPLEPFDEDYLNHLEPPVKHMSFHAYIRKLTGGADKGKFVALENISCKIKSGCEGHLPWPNGICTKCQPSAITLNRQKYRHVDNIMFENHTVADRFLDFWRKTGNQHFGYLYGRYTEHKDIPLGIRAEVAAIYEPPQIGTQNSLELLEDPKAEVVDEIASKLGLRKVGWIFTDLVSEDTRKGTVRYSRNKDTYFLSSEECITAGDFQNKHPNICRLSPDGHFGSKFVTAVATGGPDNQVHFEGYQVSNQCMALVRDECLLPCKDAPELGYAKESSSEQYVPDVFYKDIDKFGNEITQLARPLPVEYLIIDITTTFPKDPVYTFSISQNPFPIENRDVLGETQDFHSLATYLSQNTSSVFLDTISDFHLLLFLVTNEVMPLQDSISLLLEAVRTRNEELAQTWKKSEQWATIEQLCSTVGVQLPGLHEFGAVGGSARAATSAMWACQHCTFMNQPGTGHCEMCSLPRT</sequence>
<organism>
    <name type="scientific">Rattus norvegicus</name>
    <name type="common">Rat</name>
    <dbReference type="NCBI Taxonomy" id="10116"/>
    <lineage>
        <taxon>Eukaryota</taxon>
        <taxon>Metazoa</taxon>
        <taxon>Chordata</taxon>
        <taxon>Craniata</taxon>
        <taxon>Vertebrata</taxon>
        <taxon>Euteleostomi</taxon>
        <taxon>Mammalia</taxon>
        <taxon>Eutheria</taxon>
        <taxon>Euarchontoglires</taxon>
        <taxon>Glires</taxon>
        <taxon>Rodentia</taxon>
        <taxon>Myomorpha</taxon>
        <taxon>Muroidea</taxon>
        <taxon>Muridae</taxon>
        <taxon>Murinae</taxon>
        <taxon>Rattus</taxon>
    </lineage>
</organism>
<gene>
    <name type="primary">Nploc4</name>
    <name type="synonym">Npl4</name>
</gene>
<proteinExistence type="evidence at protein level"/>